<protein>
    <recommendedName>
        <fullName>Ubiquitin-conjugating enzyme E2 S</fullName>
        <ecNumber>2.3.2.23</ecNumber>
    </recommendedName>
    <alternativeName>
        <fullName>E2 ubiquitin-conjugating enzyme S</fullName>
    </alternativeName>
    <alternativeName>
        <fullName>Ubiquitin carrier protein S</fullName>
    </alternativeName>
    <alternativeName>
        <fullName>Ubiquitin-protein ligase S</fullName>
    </alternativeName>
</protein>
<evidence type="ECO:0000255" key="1">
    <source>
        <dbReference type="PROSITE-ProRule" id="PRU00388"/>
    </source>
</evidence>
<evidence type="ECO:0000255" key="2">
    <source>
        <dbReference type="PROSITE-ProRule" id="PRU10133"/>
    </source>
</evidence>
<evidence type="ECO:0000256" key="3">
    <source>
        <dbReference type="SAM" id="MobiDB-lite"/>
    </source>
</evidence>
<feature type="chain" id="PRO_0000390438" description="Ubiquitin-conjugating enzyme E2 S">
    <location>
        <begin position="1"/>
        <end position="209"/>
    </location>
</feature>
<feature type="domain" description="UBC core" evidence="1">
    <location>
        <begin position="14"/>
        <end position="160"/>
    </location>
</feature>
<feature type="region of interest" description="Disordered" evidence="3">
    <location>
        <begin position="162"/>
        <end position="209"/>
    </location>
</feature>
<feature type="compositionally biased region" description="Basic and acidic residues" evidence="3">
    <location>
        <begin position="169"/>
        <end position="199"/>
    </location>
</feature>
<feature type="compositionally biased region" description="Basic residues" evidence="3">
    <location>
        <begin position="200"/>
        <end position="209"/>
    </location>
</feature>
<feature type="active site" description="Glycyl thioester intermediate" evidence="1 2">
    <location>
        <position position="98"/>
    </location>
</feature>
<comment type="function">
    <text evidence="1">Catalyzes the covalent attachment of ubiquitin to other proteins. Acts as an essential factor of the anaphase promoting complex/cyclosome (APC/C), a cell cycle-regulated ubiquitin ligase that controls progression through mitosis. Acts by specifically elongating polyubiquitin chains initiated by the E2 enzyme vih/UbcH10 on APC/C substrates, enhancing the degradation of APC/C substrates by the proteasome and promoting mitotic exit.</text>
</comment>
<comment type="catalytic activity">
    <reaction evidence="1 2">
        <text>S-ubiquitinyl-[E1 ubiquitin-activating enzyme]-L-cysteine + [E2 ubiquitin-conjugating enzyme]-L-cysteine = [E1 ubiquitin-activating enzyme]-L-cysteine + S-ubiquitinyl-[E2 ubiquitin-conjugating enzyme]-L-cysteine.</text>
        <dbReference type="EC" id="2.3.2.23"/>
    </reaction>
</comment>
<comment type="pathway">
    <text evidence="1">Protein modification; protein ubiquitination.</text>
</comment>
<comment type="similarity">
    <text evidence="1">Belongs to the ubiquitin-conjugating enzyme family.</text>
</comment>
<organism>
    <name type="scientific">Drosophila erecta</name>
    <name type="common">Fruit fly</name>
    <dbReference type="NCBI Taxonomy" id="7220"/>
    <lineage>
        <taxon>Eukaryota</taxon>
        <taxon>Metazoa</taxon>
        <taxon>Ecdysozoa</taxon>
        <taxon>Arthropoda</taxon>
        <taxon>Hexapoda</taxon>
        <taxon>Insecta</taxon>
        <taxon>Pterygota</taxon>
        <taxon>Neoptera</taxon>
        <taxon>Endopterygota</taxon>
        <taxon>Diptera</taxon>
        <taxon>Brachycera</taxon>
        <taxon>Muscomorpha</taxon>
        <taxon>Ephydroidea</taxon>
        <taxon>Drosophilidae</taxon>
        <taxon>Drosophila</taxon>
        <taxon>Sophophora</taxon>
    </lineage>
</organism>
<accession>B3NWW9</accession>
<name>UBE2S_DROER</name>
<keyword id="KW-0067">ATP-binding</keyword>
<keyword id="KW-0131">Cell cycle</keyword>
<keyword id="KW-0132">Cell division</keyword>
<keyword id="KW-0547">Nucleotide-binding</keyword>
<keyword id="KW-0808">Transferase</keyword>
<keyword id="KW-0833">Ubl conjugation pathway</keyword>
<gene>
    <name type="ORF">GG18165</name>
</gene>
<sequence length="209" mass="23450">MSSQYSNVENLSPQTIRQVMRELQEMETTPPEGIKVLINESDVTDIQALIDGPAGTPYAAGVFRVKLTLNKDFPQTPPKAYFLTKIFHPNVAANGEICVNTLKKDWKPDLGIKHILLTIKCLLIVPNPESALNEEAGKMLLERYDDYSQRARMMTEIHAQPAKCGAGAHGDDKDDDGPSTKKHAGLDKKLQDKKKEKLLKEKKRMLKRL</sequence>
<reference key="1">
    <citation type="journal article" date="2007" name="Nature">
        <title>Evolution of genes and genomes on the Drosophila phylogeny.</title>
        <authorList>
            <consortium name="Drosophila 12 genomes consortium"/>
        </authorList>
    </citation>
    <scope>NUCLEOTIDE SEQUENCE [LARGE SCALE GENOMIC DNA]</scope>
    <source>
        <strain>Tucson 14021-0224.01</strain>
    </source>
</reference>
<dbReference type="EC" id="2.3.2.23"/>
<dbReference type="EMBL" id="CH954180">
    <property type="protein sequence ID" value="EDV46516.1"/>
    <property type="molecule type" value="Genomic_DNA"/>
</dbReference>
<dbReference type="SMR" id="B3NWW9"/>
<dbReference type="EnsemblMetazoa" id="FBtr0138219">
    <property type="protein sequence ID" value="FBpp0136711"/>
    <property type="gene ID" value="FBgn0110381"/>
</dbReference>
<dbReference type="EnsemblMetazoa" id="XM_001977553.3">
    <property type="protein sequence ID" value="XP_001977589.1"/>
    <property type="gene ID" value="LOC6549769"/>
</dbReference>
<dbReference type="GeneID" id="6549769"/>
<dbReference type="KEGG" id="der:6549769"/>
<dbReference type="eggNOG" id="KOG0423">
    <property type="taxonomic scope" value="Eukaryota"/>
</dbReference>
<dbReference type="HOGENOM" id="CLU_030988_5_3_1"/>
<dbReference type="OMA" id="QPAKCGA"/>
<dbReference type="OrthoDB" id="10069349at2759"/>
<dbReference type="PhylomeDB" id="B3NWW9"/>
<dbReference type="UniPathway" id="UPA00143"/>
<dbReference type="Proteomes" id="UP000008711">
    <property type="component" value="Unassembled WGS sequence"/>
</dbReference>
<dbReference type="GO" id="GO:0005524">
    <property type="term" value="F:ATP binding"/>
    <property type="evidence" value="ECO:0007669"/>
    <property type="project" value="UniProtKB-KW"/>
</dbReference>
<dbReference type="GO" id="GO:0061631">
    <property type="term" value="F:ubiquitin conjugating enzyme activity"/>
    <property type="evidence" value="ECO:0007669"/>
    <property type="project" value="UniProtKB-EC"/>
</dbReference>
<dbReference type="GO" id="GO:0031145">
    <property type="term" value="P:anaphase-promoting complex-dependent catabolic process"/>
    <property type="evidence" value="ECO:0000250"/>
    <property type="project" value="UniProtKB"/>
</dbReference>
<dbReference type="GO" id="GO:0051301">
    <property type="term" value="P:cell division"/>
    <property type="evidence" value="ECO:0007669"/>
    <property type="project" value="UniProtKB-KW"/>
</dbReference>
<dbReference type="GO" id="GO:0010458">
    <property type="term" value="P:exit from mitosis"/>
    <property type="evidence" value="ECO:0000250"/>
    <property type="project" value="UniProtKB"/>
</dbReference>
<dbReference type="GO" id="GO:0016567">
    <property type="term" value="P:protein ubiquitination"/>
    <property type="evidence" value="ECO:0007669"/>
    <property type="project" value="UniProtKB-UniPathway"/>
</dbReference>
<dbReference type="CDD" id="cd23804">
    <property type="entry name" value="UBCc_UBE2S"/>
    <property type="match status" value="1"/>
</dbReference>
<dbReference type="FunFam" id="3.10.110.10:FF:000034">
    <property type="entry name" value="Ubiquitin-conjugating enzyme E2 S"/>
    <property type="match status" value="1"/>
</dbReference>
<dbReference type="Gene3D" id="3.10.110.10">
    <property type="entry name" value="Ubiquitin Conjugating Enzyme"/>
    <property type="match status" value="1"/>
</dbReference>
<dbReference type="InterPro" id="IPR050113">
    <property type="entry name" value="Ub_conjugating_enzyme"/>
</dbReference>
<dbReference type="InterPro" id="IPR000608">
    <property type="entry name" value="UBQ-conjugat_E2_core"/>
</dbReference>
<dbReference type="InterPro" id="IPR023313">
    <property type="entry name" value="UBQ-conjugating_AS"/>
</dbReference>
<dbReference type="InterPro" id="IPR016135">
    <property type="entry name" value="UBQ-conjugating_enzyme/RWD"/>
</dbReference>
<dbReference type="PANTHER" id="PTHR24067">
    <property type="entry name" value="UBIQUITIN-CONJUGATING ENZYME E2"/>
    <property type="match status" value="1"/>
</dbReference>
<dbReference type="Pfam" id="PF00179">
    <property type="entry name" value="UQ_con"/>
    <property type="match status" value="1"/>
</dbReference>
<dbReference type="SMART" id="SM00212">
    <property type="entry name" value="UBCc"/>
    <property type="match status" value="1"/>
</dbReference>
<dbReference type="SUPFAM" id="SSF54495">
    <property type="entry name" value="UBC-like"/>
    <property type="match status" value="1"/>
</dbReference>
<dbReference type="PROSITE" id="PS00183">
    <property type="entry name" value="UBC_1"/>
    <property type="match status" value="1"/>
</dbReference>
<dbReference type="PROSITE" id="PS50127">
    <property type="entry name" value="UBC_2"/>
    <property type="match status" value="1"/>
</dbReference>
<proteinExistence type="inferred from homology"/>